<comment type="function">
    <text evidence="1">Nucleotidase that shows phosphatase activity on nucleoside 5'-monophosphates.</text>
</comment>
<comment type="catalytic activity">
    <reaction evidence="1">
        <text>a ribonucleoside 5'-phosphate + H2O = a ribonucleoside + phosphate</text>
        <dbReference type="Rhea" id="RHEA:12484"/>
        <dbReference type="ChEBI" id="CHEBI:15377"/>
        <dbReference type="ChEBI" id="CHEBI:18254"/>
        <dbReference type="ChEBI" id="CHEBI:43474"/>
        <dbReference type="ChEBI" id="CHEBI:58043"/>
        <dbReference type="EC" id="3.1.3.5"/>
    </reaction>
</comment>
<comment type="cofactor">
    <cofactor evidence="1">
        <name>a divalent metal cation</name>
        <dbReference type="ChEBI" id="CHEBI:60240"/>
    </cofactor>
    <text evidence="1">Binds 1 divalent metal cation per subunit.</text>
</comment>
<comment type="subcellular location">
    <subcellularLocation>
        <location evidence="1">Cytoplasm</location>
    </subcellularLocation>
</comment>
<comment type="similarity">
    <text evidence="1">Belongs to the SurE nucleotidase family.</text>
</comment>
<organism>
    <name type="scientific">Wolbachia pipientis subsp. Culex pipiens (strain wPip)</name>
    <dbReference type="NCBI Taxonomy" id="570417"/>
    <lineage>
        <taxon>Bacteria</taxon>
        <taxon>Pseudomonadati</taxon>
        <taxon>Pseudomonadota</taxon>
        <taxon>Alphaproteobacteria</taxon>
        <taxon>Rickettsiales</taxon>
        <taxon>Anaplasmataceae</taxon>
        <taxon>Wolbachieae</taxon>
        <taxon>Wolbachia</taxon>
    </lineage>
</organism>
<feature type="chain" id="PRO_1000092046" description="5'-nucleotidase SurE">
    <location>
        <begin position="1"/>
        <end position="256"/>
    </location>
</feature>
<feature type="binding site" evidence="1">
    <location>
        <position position="8"/>
    </location>
    <ligand>
        <name>a divalent metal cation</name>
        <dbReference type="ChEBI" id="CHEBI:60240"/>
    </ligand>
</feature>
<feature type="binding site" evidence="1">
    <location>
        <position position="9"/>
    </location>
    <ligand>
        <name>a divalent metal cation</name>
        <dbReference type="ChEBI" id="CHEBI:60240"/>
    </ligand>
</feature>
<feature type="binding site" evidence="1">
    <location>
        <position position="40"/>
    </location>
    <ligand>
        <name>a divalent metal cation</name>
        <dbReference type="ChEBI" id="CHEBI:60240"/>
    </ligand>
</feature>
<feature type="binding site" evidence="1">
    <location>
        <position position="94"/>
    </location>
    <ligand>
        <name>a divalent metal cation</name>
        <dbReference type="ChEBI" id="CHEBI:60240"/>
    </ligand>
</feature>
<sequence length="256" mass="27857">MIILITNDDGFESEGIRLLKEIAQNFASEVWIVAPDADRSGAARSLDYPVKQFIKISQHSEREFSVSGTPADCVIIALNKIMNKKPDLILSGVNIGSNVGDDICYSGTIGAAMEGAARSIPSIALSQVYHDKIDWNNTKIFAPKVIAKLMKVGWPKDIVMSINFPATEKVKGVEFAEQGEYNIDGDLTFTENLNGSLSLNWSREHSGSGSVDKIKGGFITITPIKLDFTDYDILNAMKNSCAEEFSSIANTPIASD</sequence>
<dbReference type="EC" id="3.1.3.5" evidence="1"/>
<dbReference type="EMBL" id="AM999887">
    <property type="protein sequence ID" value="CAQ54833.1"/>
    <property type="molecule type" value="Genomic_DNA"/>
</dbReference>
<dbReference type="RefSeq" id="WP_007302143.1">
    <property type="nucleotide sequence ID" value="NC_010981.1"/>
</dbReference>
<dbReference type="SMR" id="B3CLR5"/>
<dbReference type="KEGG" id="wpi:WP0725"/>
<dbReference type="eggNOG" id="COG0496">
    <property type="taxonomic scope" value="Bacteria"/>
</dbReference>
<dbReference type="HOGENOM" id="CLU_045192_1_2_5"/>
<dbReference type="Proteomes" id="UP000008814">
    <property type="component" value="Chromosome"/>
</dbReference>
<dbReference type="GO" id="GO:0005737">
    <property type="term" value="C:cytoplasm"/>
    <property type="evidence" value="ECO:0007669"/>
    <property type="project" value="UniProtKB-SubCell"/>
</dbReference>
<dbReference type="GO" id="GO:0008254">
    <property type="term" value="F:3'-nucleotidase activity"/>
    <property type="evidence" value="ECO:0007669"/>
    <property type="project" value="TreeGrafter"/>
</dbReference>
<dbReference type="GO" id="GO:0008253">
    <property type="term" value="F:5'-nucleotidase activity"/>
    <property type="evidence" value="ECO:0007669"/>
    <property type="project" value="UniProtKB-UniRule"/>
</dbReference>
<dbReference type="GO" id="GO:0004309">
    <property type="term" value="F:exopolyphosphatase activity"/>
    <property type="evidence" value="ECO:0007669"/>
    <property type="project" value="TreeGrafter"/>
</dbReference>
<dbReference type="GO" id="GO:0046872">
    <property type="term" value="F:metal ion binding"/>
    <property type="evidence" value="ECO:0007669"/>
    <property type="project" value="UniProtKB-UniRule"/>
</dbReference>
<dbReference type="GO" id="GO:0000166">
    <property type="term" value="F:nucleotide binding"/>
    <property type="evidence" value="ECO:0007669"/>
    <property type="project" value="UniProtKB-KW"/>
</dbReference>
<dbReference type="Gene3D" id="3.40.1210.10">
    <property type="entry name" value="Survival protein SurE-like phosphatase/nucleotidase"/>
    <property type="match status" value="1"/>
</dbReference>
<dbReference type="HAMAP" id="MF_00060">
    <property type="entry name" value="SurE"/>
    <property type="match status" value="1"/>
</dbReference>
<dbReference type="InterPro" id="IPR030048">
    <property type="entry name" value="SurE"/>
</dbReference>
<dbReference type="InterPro" id="IPR002828">
    <property type="entry name" value="SurE-like_Pase/nucleotidase"/>
</dbReference>
<dbReference type="InterPro" id="IPR036523">
    <property type="entry name" value="SurE-like_sf"/>
</dbReference>
<dbReference type="NCBIfam" id="NF001490">
    <property type="entry name" value="PRK00346.1-4"/>
    <property type="match status" value="1"/>
</dbReference>
<dbReference type="NCBIfam" id="TIGR00087">
    <property type="entry name" value="surE"/>
    <property type="match status" value="1"/>
</dbReference>
<dbReference type="PANTHER" id="PTHR30457">
    <property type="entry name" value="5'-NUCLEOTIDASE SURE"/>
    <property type="match status" value="1"/>
</dbReference>
<dbReference type="PANTHER" id="PTHR30457:SF12">
    <property type="entry name" value="5'_3'-NUCLEOTIDASE SURE"/>
    <property type="match status" value="1"/>
</dbReference>
<dbReference type="Pfam" id="PF01975">
    <property type="entry name" value="SurE"/>
    <property type="match status" value="1"/>
</dbReference>
<dbReference type="SUPFAM" id="SSF64167">
    <property type="entry name" value="SurE-like"/>
    <property type="match status" value="1"/>
</dbReference>
<evidence type="ECO:0000255" key="1">
    <source>
        <dbReference type="HAMAP-Rule" id="MF_00060"/>
    </source>
</evidence>
<gene>
    <name evidence="1" type="primary">surE</name>
    <name type="ordered locus">WP0725</name>
</gene>
<name>SURE_WOLPP</name>
<keyword id="KW-0963">Cytoplasm</keyword>
<keyword id="KW-0378">Hydrolase</keyword>
<keyword id="KW-0479">Metal-binding</keyword>
<keyword id="KW-0547">Nucleotide-binding</keyword>
<protein>
    <recommendedName>
        <fullName evidence="1">5'-nucleotidase SurE</fullName>
        <ecNumber evidence="1">3.1.3.5</ecNumber>
    </recommendedName>
    <alternativeName>
        <fullName evidence="1">Nucleoside 5'-monophosphate phosphohydrolase</fullName>
    </alternativeName>
</protein>
<accession>B3CLR5</accession>
<proteinExistence type="inferred from homology"/>
<reference key="1">
    <citation type="journal article" date="2008" name="Mol. Biol. Evol.">
        <title>Genome evolution of Wolbachia strain wPip from the Culex pipiens group.</title>
        <authorList>
            <person name="Klasson L."/>
            <person name="Walker T."/>
            <person name="Sebaihia M."/>
            <person name="Sanders M.J."/>
            <person name="Quail M.A."/>
            <person name="Lord A."/>
            <person name="Sanders S."/>
            <person name="Earl J."/>
            <person name="O'Neill S.L."/>
            <person name="Thomson N."/>
            <person name="Sinkins S.P."/>
            <person name="Parkhill J."/>
        </authorList>
    </citation>
    <scope>NUCLEOTIDE SEQUENCE [LARGE SCALE GENOMIC DNA]</scope>
    <source>
        <strain>wPip</strain>
    </source>
</reference>